<sequence>MVLISVLANLLILQLSYAQKSSELVIGGDECNINEHRFLVALYNSRSRTLFCGGTLINQEWVLTAAHCERKNFRIKLGIHSKKVPNEDEQTRVPKEKFFCLSSKNYTLWDKDIMLIRLDSPVSNSEHIAPLSLPSSPPSVGSVCRIMGWGRISPTKETYPDVPHCANINLLEYEMCRAPYPEFGLPATSRTLCAGILEGGKDTCRGDSGGPLICNGQFQGIASWGDDPCAQPHKPAAYTKVFDHLDWIQSIIAGNTDASCPP</sequence>
<feature type="signal peptide" evidence="1">
    <location>
        <begin position="1"/>
        <end position="18"/>
    </location>
</feature>
<feature type="propeptide" id="PRO_0000028369">
    <location>
        <begin position="19"/>
        <end position="24"/>
    </location>
</feature>
<feature type="chain" id="PRO_0000028370" description="Thrombin-like enzyme calobin-1">
    <location>
        <begin position="25"/>
        <end position="262"/>
    </location>
</feature>
<feature type="domain" description="Peptidase S1" evidence="2">
    <location>
        <begin position="25"/>
        <end position="253"/>
    </location>
</feature>
<feature type="active site" description="Charge relay system" evidence="1">
    <location>
        <position position="67"/>
    </location>
</feature>
<feature type="active site" description="Charge relay system" evidence="1">
    <location>
        <position position="112"/>
    </location>
</feature>
<feature type="active site" description="Charge relay system" evidence="1">
    <location>
        <position position="208"/>
    </location>
</feature>
<feature type="glycosylation site" description="N-linked (GlcNAc...) asparagine" evidence="4">
    <location>
        <position position="105"/>
    </location>
</feature>
<feature type="disulfide bond" evidence="2">
    <location>
        <begin position="31"/>
        <end position="165"/>
    </location>
</feature>
<feature type="disulfide bond" evidence="2">
    <location>
        <begin position="52"/>
        <end position="68"/>
    </location>
</feature>
<feature type="disulfide bond" evidence="2">
    <location>
        <begin position="100"/>
        <end position="260"/>
    </location>
</feature>
<feature type="disulfide bond" evidence="2">
    <location>
        <begin position="144"/>
        <end position="214"/>
    </location>
</feature>
<feature type="disulfide bond" evidence="2">
    <location>
        <begin position="176"/>
        <end position="193"/>
    </location>
</feature>
<feature type="disulfide bond" evidence="2">
    <location>
        <begin position="204"/>
        <end position="229"/>
    </location>
</feature>
<reference key="1">
    <citation type="journal article" date="1996" name="J. Biochem.">
        <title>Purification and molecular cloning of calobin, a thrombin-like enzyme from Agkistrodon caliginosus (Korean viper).</title>
        <authorList>
            <person name="Hahn B.S."/>
            <person name="Yang K.Y."/>
            <person name="Park E.M."/>
            <person name="Chang I.M."/>
            <person name="Kim Y.S."/>
        </authorList>
    </citation>
    <scope>NUCLEOTIDE SEQUENCE [MRNA]</scope>
    <scope>FUNCTION</scope>
    <scope>ACTIVITY REGULATION</scope>
    <scope>SUBUNIT</scope>
    <scope>SUBCELLULAR LOCATION</scope>
    <scope>TISSUE SPECIFICITY</scope>
    <scope>GLYCOSYLATION</scope>
    <source>
        <tissue>Venom gland</tissue>
    </source>
</reference>
<keyword id="KW-1204">Blood coagulation cascade activating toxin</keyword>
<keyword id="KW-1015">Disulfide bond</keyword>
<keyword id="KW-0325">Glycoprotein</keyword>
<keyword id="KW-1199">Hemostasis impairing toxin</keyword>
<keyword id="KW-0378">Hydrolase</keyword>
<keyword id="KW-0645">Protease</keyword>
<keyword id="KW-0964">Secreted</keyword>
<keyword id="KW-0720">Serine protease</keyword>
<keyword id="KW-0732">Signal</keyword>
<keyword id="KW-0800">Toxin</keyword>
<keyword id="KW-0865">Zymogen</keyword>
<dbReference type="EC" id="3.4.21.-"/>
<dbReference type="EMBL" id="U32937">
    <property type="protein sequence ID" value="AAC59906.1"/>
    <property type="molecule type" value="mRNA"/>
</dbReference>
<dbReference type="PIR" id="JC4803">
    <property type="entry name" value="JC4803"/>
</dbReference>
<dbReference type="SMR" id="Q91053"/>
<dbReference type="MEROPS" id="S01.335"/>
<dbReference type="iPTMnet" id="Q91053"/>
<dbReference type="GO" id="GO:0005576">
    <property type="term" value="C:extracellular region"/>
    <property type="evidence" value="ECO:0007669"/>
    <property type="project" value="UniProtKB-SubCell"/>
</dbReference>
<dbReference type="GO" id="GO:0030141">
    <property type="term" value="C:secretory granule"/>
    <property type="evidence" value="ECO:0007669"/>
    <property type="project" value="TreeGrafter"/>
</dbReference>
<dbReference type="GO" id="GO:0004252">
    <property type="term" value="F:serine-type endopeptidase activity"/>
    <property type="evidence" value="ECO:0007669"/>
    <property type="project" value="InterPro"/>
</dbReference>
<dbReference type="GO" id="GO:0090729">
    <property type="term" value="F:toxin activity"/>
    <property type="evidence" value="ECO:0007669"/>
    <property type="project" value="UniProtKB-KW"/>
</dbReference>
<dbReference type="GO" id="GO:0006508">
    <property type="term" value="P:proteolysis"/>
    <property type="evidence" value="ECO:0007669"/>
    <property type="project" value="UniProtKB-KW"/>
</dbReference>
<dbReference type="CDD" id="cd00190">
    <property type="entry name" value="Tryp_SPc"/>
    <property type="match status" value="1"/>
</dbReference>
<dbReference type="FunFam" id="2.40.10.10:FF:000158">
    <property type="entry name" value="Thrombin-like enzyme saxthrombin"/>
    <property type="match status" value="1"/>
</dbReference>
<dbReference type="FunFam" id="2.40.10.10:FF:000153">
    <property type="entry name" value="Venom plasminogen activator TSV-PA"/>
    <property type="match status" value="1"/>
</dbReference>
<dbReference type="Gene3D" id="2.40.10.10">
    <property type="entry name" value="Trypsin-like serine proteases"/>
    <property type="match status" value="2"/>
</dbReference>
<dbReference type="InterPro" id="IPR009003">
    <property type="entry name" value="Peptidase_S1_PA"/>
</dbReference>
<dbReference type="InterPro" id="IPR043504">
    <property type="entry name" value="Peptidase_S1_PA_chymotrypsin"/>
</dbReference>
<dbReference type="InterPro" id="IPR001314">
    <property type="entry name" value="Peptidase_S1A"/>
</dbReference>
<dbReference type="InterPro" id="IPR001254">
    <property type="entry name" value="Trypsin_dom"/>
</dbReference>
<dbReference type="InterPro" id="IPR018114">
    <property type="entry name" value="TRYPSIN_HIS"/>
</dbReference>
<dbReference type="InterPro" id="IPR033116">
    <property type="entry name" value="TRYPSIN_SER"/>
</dbReference>
<dbReference type="PANTHER" id="PTHR24271:SF47">
    <property type="entry name" value="KALLIKREIN-1"/>
    <property type="match status" value="1"/>
</dbReference>
<dbReference type="PANTHER" id="PTHR24271">
    <property type="entry name" value="KALLIKREIN-RELATED"/>
    <property type="match status" value="1"/>
</dbReference>
<dbReference type="Pfam" id="PF00089">
    <property type="entry name" value="Trypsin"/>
    <property type="match status" value="1"/>
</dbReference>
<dbReference type="PRINTS" id="PR00722">
    <property type="entry name" value="CHYMOTRYPSIN"/>
</dbReference>
<dbReference type="SMART" id="SM00020">
    <property type="entry name" value="Tryp_SPc"/>
    <property type="match status" value="1"/>
</dbReference>
<dbReference type="SUPFAM" id="SSF50494">
    <property type="entry name" value="Trypsin-like serine proteases"/>
    <property type="match status" value="1"/>
</dbReference>
<dbReference type="PROSITE" id="PS50240">
    <property type="entry name" value="TRYPSIN_DOM"/>
    <property type="match status" value="1"/>
</dbReference>
<dbReference type="PROSITE" id="PS00134">
    <property type="entry name" value="TRYPSIN_HIS"/>
    <property type="match status" value="1"/>
</dbReference>
<dbReference type="PROSITE" id="PS00135">
    <property type="entry name" value="TRYPSIN_SER"/>
    <property type="match status" value="1"/>
</dbReference>
<protein>
    <recommendedName>
        <fullName>Thrombin-like enzyme calobin-1</fullName>
        <shortName>SVTLE</shortName>
        <ecNumber>3.4.21.-</ecNumber>
    </recommendedName>
    <alternativeName>
        <fullName>Calobin I</fullName>
    </alternativeName>
    <alternativeName>
        <fullName>Fibrinogen-clotting enzyme</fullName>
    </alternativeName>
    <alternativeName>
        <fullName>Snake venom serine protease</fullName>
        <shortName>SVSP</shortName>
    </alternativeName>
</protein>
<evidence type="ECO:0000250" key="1"/>
<evidence type="ECO:0000255" key="2">
    <source>
        <dbReference type="PROSITE-ProRule" id="PRU00274"/>
    </source>
</evidence>
<evidence type="ECO:0000269" key="3">
    <source>
    </source>
</evidence>
<evidence type="ECO:0000305" key="4">
    <source>
    </source>
</evidence>
<proteinExistence type="evidence at protein level"/>
<accession>Q91053</accession>
<name>VSP1_GLOUS</name>
<organism>
    <name type="scientific">Gloydius ussuriensis</name>
    <name type="common">Ussuri mamushi</name>
    <name type="synonym">Gloydius blomhoffii ussuriensis</name>
    <dbReference type="NCBI Taxonomy" id="35671"/>
    <lineage>
        <taxon>Eukaryota</taxon>
        <taxon>Metazoa</taxon>
        <taxon>Chordata</taxon>
        <taxon>Craniata</taxon>
        <taxon>Vertebrata</taxon>
        <taxon>Euteleostomi</taxon>
        <taxon>Lepidosauria</taxon>
        <taxon>Squamata</taxon>
        <taxon>Bifurcata</taxon>
        <taxon>Unidentata</taxon>
        <taxon>Episquamata</taxon>
        <taxon>Toxicofera</taxon>
        <taxon>Serpentes</taxon>
        <taxon>Colubroidea</taxon>
        <taxon>Viperidae</taxon>
        <taxon>Crotalinae</taxon>
        <taxon>Gloydius</taxon>
    </lineage>
</organism>
<comment type="function">
    <text evidence="3">Thrombin-like snake venom serine protease. Has a coagulant activity. Acts on alpha-chains of fibrinogen (FGA) generating fibrinopeptide A.</text>
</comment>
<comment type="activity regulation">
    <text evidence="3">Strongly inhibited by PMSF, and moderately by benzamidine and soybean trypsin inhibitor.</text>
</comment>
<comment type="subunit">
    <text evidence="3">Monomer.</text>
</comment>
<comment type="subcellular location">
    <subcellularLocation>
        <location evidence="3">Secreted</location>
    </subcellularLocation>
</comment>
<comment type="tissue specificity">
    <text evidence="3">Expressed by the venom gland.</text>
</comment>
<comment type="PTM">
    <text evidence="3">N-glycosylated.</text>
</comment>
<comment type="miscellaneous">
    <text evidence="4">Negative results: does not show lysine esterase and caseinolytic activity.</text>
</comment>
<comment type="similarity">
    <text evidence="2">Belongs to the peptidase S1 family. Snake venom subfamily.</text>
</comment>